<feature type="chain" id="PRO_1000195447" description="Serine hydroxymethyltransferase">
    <location>
        <begin position="1"/>
        <end position="417"/>
    </location>
</feature>
<feature type="binding site" evidence="1">
    <location>
        <position position="121"/>
    </location>
    <ligand>
        <name>(6S)-5,6,7,8-tetrahydrofolate</name>
        <dbReference type="ChEBI" id="CHEBI:57453"/>
    </ligand>
</feature>
<feature type="binding site" evidence="1">
    <location>
        <begin position="125"/>
        <end position="127"/>
    </location>
    <ligand>
        <name>(6S)-5,6,7,8-tetrahydrofolate</name>
        <dbReference type="ChEBI" id="CHEBI:57453"/>
    </ligand>
</feature>
<feature type="binding site" evidence="1">
    <location>
        <begin position="355"/>
        <end position="357"/>
    </location>
    <ligand>
        <name>(6S)-5,6,7,8-tetrahydrofolate</name>
        <dbReference type="ChEBI" id="CHEBI:57453"/>
    </ligand>
</feature>
<feature type="site" description="Plays an important role in substrate specificity" evidence="1">
    <location>
        <position position="228"/>
    </location>
</feature>
<feature type="modified residue" description="N6-acetyllysine" evidence="1">
    <location>
        <position position="54"/>
    </location>
</feature>
<feature type="modified residue" description="N6-(pyridoxal phosphate)lysine" evidence="1">
    <location>
        <position position="229"/>
    </location>
</feature>
<feature type="modified residue" description="N6-acetyllysine" evidence="1">
    <location>
        <position position="250"/>
    </location>
</feature>
<feature type="modified residue" description="N6-acetyllysine" evidence="1">
    <location>
        <position position="285"/>
    </location>
</feature>
<feature type="modified residue" description="N6-acetyllysine" evidence="1">
    <location>
        <position position="354"/>
    </location>
</feature>
<feature type="modified residue" description="N6-acetyllysine" evidence="1">
    <location>
        <position position="375"/>
    </location>
</feature>
<dbReference type="EC" id="2.1.2.1" evidence="1"/>
<dbReference type="EMBL" id="CU928162">
    <property type="protein sequence ID" value="CAR09146.2"/>
    <property type="molecule type" value="Genomic_DNA"/>
</dbReference>
<dbReference type="RefSeq" id="WP_000919159.1">
    <property type="nucleotide sequence ID" value="NC_011745.1"/>
</dbReference>
<dbReference type="SMR" id="B7MYI0"/>
<dbReference type="GeneID" id="89517346"/>
<dbReference type="KEGG" id="ecq:ECED1_2978"/>
<dbReference type="HOGENOM" id="CLU_022477_2_1_6"/>
<dbReference type="UniPathway" id="UPA00193"/>
<dbReference type="UniPathway" id="UPA00288">
    <property type="reaction ID" value="UER01023"/>
</dbReference>
<dbReference type="Proteomes" id="UP000000748">
    <property type="component" value="Chromosome"/>
</dbReference>
<dbReference type="GO" id="GO:0005829">
    <property type="term" value="C:cytosol"/>
    <property type="evidence" value="ECO:0007669"/>
    <property type="project" value="TreeGrafter"/>
</dbReference>
<dbReference type="GO" id="GO:0004372">
    <property type="term" value="F:glycine hydroxymethyltransferase activity"/>
    <property type="evidence" value="ECO:0007669"/>
    <property type="project" value="UniProtKB-UniRule"/>
</dbReference>
<dbReference type="GO" id="GO:0030170">
    <property type="term" value="F:pyridoxal phosphate binding"/>
    <property type="evidence" value="ECO:0007669"/>
    <property type="project" value="UniProtKB-UniRule"/>
</dbReference>
<dbReference type="GO" id="GO:0019264">
    <property type="term" value="P:glycine biosynthetic process from serine"/>
    <property type="evidence" value="ECO:0007669"/>
    <property type="project" value="UniProtKB-UniRule"/>
</dbReference>
<dbReference type="GO" id="GO:0035999">
    <property type="term" value="P:tetrahydrofolate interconversion"/>
    <property type="evidence" value="ECO:0007669"/>
    <property type="project" value="UniProtKB-UniRule"/>
</dbReference>
<dbReference type="CDD" id="cd00378">
    <property type="entry name" value="SHMT"/>
    <property type="match status" value="1"/>
</dbReference>
<dbReference type="FunFam" id="3.40.640.10:FF:000001">
    <property type="entry name" value="Serine hydroxymethyltransferase"/>
    <property type="match status" value="1"/>
</dbReference>
<dbReference type="FunFam" id="3.90.1150.10:FF:000003">
    <property type="entry name" value="Serine hydroxymethyltransferase"/>
    <property type="match status" value="1"/>
</dbReference>
<dbReference type="Gene3D" id="3.90.1150.10">
    <property type="entry name" value="Aspartate Aminotransferase, domain 1"/>
    <property type="match status" value="1"/>
</dbReference>
<dbReference type="Gene3D" id="3.40.640.10">
    <property type="entry name" value="Type I PLP-dependent aspartate aminotransferase-like (Major domain)"/>
    <property type="match status" value="1"/>
</dbReference>
<dbReference type="HAMAP" id="MF_00051">
    <property type="entry name" value="SHMT"/>
    <property type="match status" value="1"/>
</dbReference>
<dbReference type="InterPro" id="IPR015424">
    <property type="entry name" value="PyrdxlP-dep_Trfase"/>
</dbReference>
<dbReference type="InterPro" id="IPR015421">
    <property type="entry name" value="PyrdxlP-dep_Trfase_major"/>
</dbReference>
<dbReference type="InterPro" id="IPR015422">
    <property type="entry name" value="PyrdxlP-dep_Trfase_small"/>
</dbReference>
<dbReference type="InterPro" id="IPR001085">
    <property type="entry name" value="Ser_HO-MeTrfase"/>
</dbReference>
<dbReference type="InterPro" id="IPR049943">
    <property type="entry name" value="Ser_HO-MeTrfase-like"/>
</dbReference>
<dbReference type="InterPro" id="IPR019798">
    <property type="entry name" value="Ser_HO-MeTrfase_PLP_BS"/>
</dbReference>
<dbReference type="InterPro" id="IPR039429">
    <property type="entry name" value="SHMT-like_dom"/>
</dbReference>
<dbReference type="NCBIfam" id="NF000586">
    <property type="entry name" value="PRK00011.1"/>
    <property type="match status" value="1"/>
</dbReference>
<dbReference type="PANTHER" id="PTHR11680">
    <property type="entry name" value="SERINE HYDROXYMETHYLTRANSFERASE"/>
    <property type="match status" value="1"/>
</dbReference>
<dbReference type="PANTHER" id="PTHR11680:SF50">
    <property type="entry name" value="SERINE HYDROXYMETHYLTRANSFERASE"/>
    <property type="match status" value="1"/>
</dbReference>
<dbReference type="Pfam" id="PF00464">
    <property type="entry name" value="SHMT"/>
    <property type="match status" value="1"/>
</dbReference>
<dbReference type="PIRSF" id="PIRSF000412">
    <property type="entry name" value="SHMT"/>
    <property type="match status" value="1"/>
</dbReference>
<dbReference type="SUPFAM" id="SSF53383">
    <property type="entry name" value="PLP-dependent transferases"/>
    <property type="match status" value="1"/>
</dbReference>
<dbReference type="PROSITE" id="PS00096">
    <property type="entry name" value="SHMT"/>
    <property type="match status" value="1"/>
</dbReference>
<name>GLYA_ECO81</name>
<protein>
    <recommendedName>
        <fullName evidence="1">Serine hydroxymethyltransferase</fullName>
        <shortName evidence="1">SHMT</shortName>
        <shortName evidence="1">Serine methylase</shortName>
        <ecNumber evidence="1">2.1.2.1</ecNumber>
    </recommendedName>
</protein>
<gene>
    <name evidence="1" type="primary">glyA</name>
    <name type="ordered locus">ECED1_2978</name>
</gene>
<accession>B7MYI0</accession>
<sequence>MLKREMNIADYDAELWQAMEQEKVRQEEHIELIASENYTSPRVMQAQGSQLTNKYAEGYPGKRYYGGCEYVDIVEQLAIDRAKELFGADYANVQPHSGSQANFAVYTALLEPGDTVLGMNLAHGGHLTHGSPVNFSGKLYNIVPYGIDATGHIDYADLEKQAKEHKPKMIIGGFSAYSGVVDWAKMREIADSIGAYLFVDMAHVAGLVAAGVYPNPVPHAHVVTTTTHKTLAGPRGGLILAKGGSEELYKKLNSAVFPGGQGGPLMHVIAGKAVALKEAMEPEFKTYQQQVAKNAKAMVEVFLERGYKVVSGGTDNHLFLVDLVDKNLTGKEADAALGRANITVNKNSVPNDPKSPFVTSGIRVGTPAITRRGFKEAEAKELAGWMCDVLDSINDEAVIERIKGKVLDICARYPVYA</sequence>
<organism>
    <name type="scientific">Escherichia coli O81 (strain ED1a)</name>
    <dbReference type="NCBI Taxonomy" id="585397"/>
    <lineage>
        <taxon>Bacteria</taxon>
        <taxon>Pseudomonadati</taxon>
        <taxon>Pseudomonadota</taxon>
        <taxon>Gammaproteobacteria</taxon>
        <taxon>Enterobacterales</taxon>
        <taxon>Enterobacteriaceae</taxon>
        <taxon>Escherichia</taxon>
    </lineage>
</organism>
<comment type="function">
    <text evidence="1">Catalyzes the reversible interconversion of serine and glycine with tetrahydrofolate (THF) serving as the one-carbon carrier. This reaction serves as the major source of one-carbon groups required for the biosynthesis of purines, thymidylate, methionine, and other important biomolecules. Also exhibits THF-independent aldolase activity toward beta-hydroxyamino acids, producing glycine and aldehydes, via a retro-aldol mechanism.</text>
</comment>
<comment type="catalytic activity">
    <reaction evidence="1">
        <text>(6R)-5,10-methylene-5,6,7,8-tetrahydrofolate + glycine + H2O = (6S)-5,6,7,8-tetrahydrofolate + L-serine</text>
        <dbReference type="Rhea" id="RHEA:15481"/>
        <dbReference type="ChEBI" id="CHEBI:15377"/>
        <dbReference type="ChEBI" id="CHEBI:15636"/>
        <dbReference type="ChEBI" id="CHEBI:33384"/>
        <dbReference type="ChEBI" id="CHEBI:57305"/>
        <dbReference type="ChEBI" id="CHEBI:57453"/>
        <dbReference type="EC" id="2.1.2.1"/>
    </reaction>
</comment>
<comment type="cofactor">
    <cofactor evidence="1">
        <name>pyridoxal 5'-phosphate</name>
        <dbReference type="ChEBI" id="CHEBI:597326"/>
    </cofactor>
</comment>
<comment type="pathway">
    <text evidence="1">One-carbon metabolism; tetrahydrofolate interconversion.</text>
</comment>
<comment type="pathway">
    <text evidence="1">Amino-acid biosynthesis; glycine biosynthesis; glycine from L-serine: step 1/1.</text>
</comment>
<comment type="subunit">
    <text evidence="1">Homodimer.</text>
</comment>
<comment type="subcellular location">
    <subcellularLocation>
        <location evidence="1">Cytoplasm</location>
    </subcellularLocation>
</comment>
<comment type="similarity">
    <text evidence="1">Belongs to the SHMT family.</text>
</comment>
<keyword id="KW-0007">Acetylation</keyword>
<keyword id="KW-0028">Amino-acid biosynthesis</keyword>
<keyword id="KW-0963">Cytoplasm</keyword>
<keyword id="KW-0554">One-carbon metabolism</keyword>
<keyword id="KW-0663">Pyridoxal phosphate</keyword>
<keyword id="KW-0808">Transferase</keyword>
<proteinExistence type="inferred from homology"/>
<reference key="1">
    <citation type="journal article" date="2009" name="PLoS Genet.">
        <title>Organised genome dynamics in the Escherichia coli species results in highly diverse adaptive paths.</title>
        <authorList>
            <person name="Touchon M."/>
            <person name="Hoede C."/>
            <person name="Tenaillon O."/>
            <person name="Barbe V."/>
            <person name="Baeriswyl S."/>
            <person name="Bidet P."/>
            <person name="Bingen E."/>
            <person name="Bonacorsi S."/>
            <person name="Bouchier C."/>
            <person name="Bouvet O."/>
            <person name="Calteau A."/>
            <person name="Chiapello H."/>
            <person name="Clermont O."/>
            <person name="Cruveiller S."/>
            <person name="Danchin A."/>
            <person name="Diard M."/>
            <person name="Dossat C."/>
            <person name="Karoui M.E."/>
            <person name="Frapy E."/>
            <person name="Garry L."/>
            <person name="Ghigo J.M."/>
            <person name="Gilles A.M."/>
            <person name="Johnson J."/>
            <person name="Le Bouguenec C."/>
            <person name="Lescat M."/>
            <person name="Mangenot S."/>
            <person name="Martinez-Jehanne V."/>
            <person name="Matic I."/>
            <person name="Nassif X."/>
            <person name="Oztas S."/>
            <person name="Petit M.A."/>
            <person name="Pichon C."/>
            <person name="Rouy Z."/>
            <person name="Ruf C.S."/>
            <person name="Schneider D."/>
            <person name="Tourret J."/>
            <person name="Vacherie B."/>
            <person name="Vallenet D."/>
            <person name="Medigue C."/>
            <person name="Rocha E.P.C."/>
            <person name="Denamur E."/>
        </authorList>
    </citation>
    <scope>NUCLEOTIDE SEQUENCE [LARGE SCALE GENOMIC DNA]</scope>
    <source>
        <strain>ED1a</strain>
    </source>
</reference>
<evidence type="ECO:0000255" key="1">
    <source>
        <dbReference type="HAMAP-Rule" id="MF_00051"/>
    </source>
</evidence>